<name>MSRA_VIBVU</name>
<gene>
    <name evidence="1" type="primary">msrA</name>
    <name type="ordered locus">VV1_0713</name>
</gene>
<protein>
    <recommendedName>
        <fullName evidence="1">Peptide methionine sulfoxide reductase MsrA</fullName>
        <shortName evidence="1">Protein-methionine-S-oxide reductase</shortName>
        <ecNumber evidence="1">1.8.4.11</ecNumber>
    </recommendedName>
    <alternativeName>
        <fullName evidence="1">Peptide-methionine (S)-S-oxide reductase</fullName>
        <shortName evidence="1">Peptide Met(O) reductase</shortName>
    </alternativeName>
</protein>
<comment type="function">
    <text evidence="1">Has an important function as a repair enzyme for proteins that have been inactivated by oxidation. Catalyzes the reversible oxidation-reduction of methionine sulfoxide in proteins to methionine.</text>
</comment>
<comment type="catalytic activity">
    <reaction evidence="1">
        <text>L-methionyl-[protein] + [thioredoxin]-disulfide + H2O = L-methionyl-(S)-S-oxide-[protein] + [thioredoxin]-dithiol</text>
        <dbReference type="Rhea" id="RHEA:14217"/>
        <dbReference type="Rhea" id="RHEA-COMP:10698"/>
        <dbReference type="Rhea" id="RHEA-COMP:10700"/>
        <dbReference type="Rhea" id="RHEA-COMP:12313"/>
        <dbReference type="Rhea" id="RHEA-COMP:12315"/>
        <dbReference type="ChEBI" id="CHEBI:15377"/>
        <dbReference type="ChEBI" id="CHEBI:16044"/>
        <dbReference type="ChEBI" id="CHEBI:29950"/>
        <dbReference type="ChEBI" id="CHEBI:44120"/>
        <dbReference type="ChEBI" id="CHEBI:50058"/>
        <dbReference type="EC" id="1.8.4.11"/>
    </reaction>
</comment>
<comment type="catalytic activity">
    <reaction evidence="1">
        <text>[thioredoxin]-disulfide + L-methionine + H2O = L-methionine (S)-S-oxide + [thioredoxin]-dithiol</text>
        <dbReference type="Rhea" id="RHEA:19993"/>
        <dbReference type="Rhea" id="RHEA-COMP:10698"/>
        <dbReference type="Rhea" id="RHEA-COMP:10700"/>
        <dbReference type="ChEBI" id="CHEBI:15377"/>
        <dbReference type="ChEBI" id="CHEBI:29950"/>
        <dbReference type="ChEBI" id="CHEBI:50058"/>
        <dbReference type="ChEBI" id="CHEBI:57844"/>
        <dbReference type="ChEBI" id="CHEBI:58772"/>
        <dbReference type="EC" id="1.8.4.11"/>
    </reaction>
</comment>
<comment type="similarity">
    <text evidence="1">Belongs to the MsrA Met sulfoxide reductase family.</text>
</comment>
<sequence length="209" mass="23068">MLNKQIMVDADNALAGRQEAMAVEPIHFVNGSDITASATQGQQEILFGMGCFWGAERLFWQLDGVVSTSVGYSGGFTLNPTYQEVCSGQTGHTEVVRVIFDPQVLPLEQLLEKFWERHDPTQGMRQGNDLGTQYRSAIYTFSDQQLDIALASQQAYQAALANQQHNTITTEIRPAGPYFYAETYHQQYLAKNPEGYCGLGGTGVCFPPA</sequence>
<evidence type="ECO:0000255" key="1">
    <source>
        <dbReference type="HAMAP-Rule" id="MF_01401"/>
    </source>
</evidence>
<reference key="1">
    <citation type="submission" date="2002-12" db="EMBL/GenBank/DDBJ databases">
        <title>Complete genome sequence of Vibrio vulnificus CMCP6.</title>
        <authorList>
            <person name="Rhee J.H."/>
            <person name="Kim S.Y."/>
            <person name="Chung S.S."/>
            <person name="Kim J.J."/>
            <person name="Moon Y.H."/>
            <person name="Jeong H."/>
            <person name="Choy H.E."/>
        </authorList>
    </citation>
    <scope>NUCLEOTIDE SEQUENCE [LARGE SCALE GENOMIC DNA]</scope>
    <source>
        <strain>CMCP6</strain>
    </source>
</reference>
<accession>Q8DE84</accession>
<dbReference type="EC" id="1.8.4.11" evidence="1"/>
<dbReference type="EMBL" id="AE016795">
    <property type="protein sequence ID" value="AAO09223.1"/>
    <property type="molecule type" value="Genomic_DNA"/>
</dbReference>
<dbReference type="RefSeq" id="WP_011078789.1">
    <property type="nucleotide sequence ID" value="NC_004459.3"/>
</dbReference>
<dbReference type="SMR" id="Q8DE84"/>
<dbReference type="KEGG" id="vvu:VV1_0713"/>
<dbReference type="HOGENOM" id="CLU_031040_10_3_6"/>
<dbReference type="Proteomes" id="UP000002275">
    <property type="component" value="Chromosome 1"/>
</dbReference>
<dbReference type="GO" id="GO:0005737">
    <property type="term" value="C:cytoplasm"/>
    <property type="evidence" value="ECO:0007669"/>
    <property type="project" value="TreeGrafter"/>
</dbReference>
<dbReference type="GO" id="GO:0036456">
    <property type="term" value="F:L-methionine-(S)-S-oxide reductase activity"/>
    <property type="evidence" value="ECO:0007669"/>
    <property type="project" value="TreeGrafter"/>
</dbReference>
<dbReference type="GO" id="GO:0008113">
    <property type="term" value="F:peptide-methionine (S)-S-oxide reductase activity"/>
    <property type="evidence" value="ECO:0007669"/>
    <property type="project" value="UniProtKB-UniRule"/>
</dbReference>
<dbReference type="GO" id="GO:0034599">
    <property type="term" value="P:cellular response to oxidative stress"/>
    <property type="evidence" value="ECO:0007669"/>
    <property type="project" value="TreeGrafter"/>
</dbReference>
<dbReference type="GO" id="GO:0036211">
    <property type="term" value="P:protein modification process"/>
    <property type="evidence" value="ECO:0007669"/>
    <property type="project" value="UniProtKB-UniRule"/>
</dbReference>
<dbReference type="FunFam" id="3.30.1060.10:FF:000001">
    <property type="entry name" value="Peptide methionine sulfoxide reductase MsrA"/>
    <property type="match status" value="1"/>
</dbReference>
<dbReference type="Gene3D" id="3.30.1060.10">
    <property type="entry name" value="Peptide methionine sulphoxide reductase MsrA"/>
    <property type="match status" value="1"/>
</dbReference>
<dbReference type="HAMAP" id="MF_01401">
    <property type="entry name" value="MsrA"/>
    <property type="match status" value="1"/>
</dbReference>
<dbReference type="InterPro" id="IPR002569">
    <property type="entry name" value="Met_Sox_Rdtase_MsrA_dom"/>
</dbReference>
<dbReference type="InterPro" id="IPR036509">
    <property type="entry name" value="Met_Sox_Rdtase_MsrA_sf"/>
</dbReference>
<dbReference type="InterPro" id="IPR050162">
    <property type="entry name" value="MsrA_MetSO_reductase"/>
</dbReference>
<dbReference type="NCBIfam" id="TIGR00401">
    <property type="entry name" value="msrA"/>
    <property type="match status" value="1"/>
</dbReference>
<dbReference type="PANTHER" id="PTHR42799">
    <property type="entry name" value="MITOCHONDRIAL PEPTIDE METHIONINE SULFOXIDE REDUCTASE"/>
    <property type="match status" value="1"/>
</dbReference>
<dbReference type="PANTHER" id="PTHR42799:SF2">
    <property type="entry name" value="MITOCHONDRIAL PEPTIDE METHIONINE SULFOXIDE REDUCTASE"/>
    <property type="match status" value="1"/>
</dbReference>
<dbReference type="Pfam" id="PF01625">
    <property type="entry name" value="PMSR"/>
    <property type="match status" value="1"/>
</dbReference>
<dbReference type="SUPFAM" id="SSF55068">
    <property type="entry name" value="Peptide methionine sulfoxide reductase"/>
    <property type="match status" value="1"/>
</dbReference>
<proteinExistence type="inferred from homology"/>
<feature type="chain" id="PRO_0000138609" description="Peptide methionine sulfoxide reductase MsrA">
    <location>
        <begin position="1"/>
        <end position="209"/>
    </location>
</feature>
<feature type="active site" evidence="1">
    <location>
        <position position="51"/>
    </location>
</feature>
<keyword id="KW-0560">Oxidoreductase</keyword>
<organism>
    <name type="scientific">Vibrio vulnificus (strain CMCP6)</name>
    <dbReference type="NCBI Taxonomy" id="216895"/>
    <lineage>
        <taxon>Bacteria</taxon>
        <taxon>Pseudomonadati</taxon>
        <taxon>Pseudomonadota</taxon>
        <taxon>Gammaproteobacteria</taxon>
        <taxon>Vibrionales</taxon>
        <taxon>Vibrionaceae</taxon>
        <taxon>Vibrio</taxon>
    </lineage>
</organism>